<protein>
    <recommendedName>
        <fullName evidence="1">GTPase Era</fullName>
    </recommendedName>
</protein>
<sequence length="296" mass="33032">MSNPQFRAGFVAIVGRPNVGKSTLTNALIGTKISIVSRKAQTTRHRIHGVLTREHEQFVFVDTPGFQTRHGGAMNRMMNRVVTQALADVDVVVHVVEAGKWSEGDAKLLPLLPKSRRSILVVSKIDALKNRDELFPFVSKLMALHAYDAVVPVSATKGQQLDQLLDEIAAGLPQGDPMFEEDTLTDRPVRFIAAELVREKIFRLVGDELPYGCTVVIEQWEETERGVRIAACVVVERESHRPILLGAGGMHMKRIATEARQDIAKLLDMPVHLEIYIKVRKGWSDREGALRDLGYE</sequence>
<dbReference type="EMBL" id="BX640448">
    <property type="protein sequence ID" value="CAE35719.1"/>
    <property type="molecule type" value="Genomic_DNA"/>
</dbReference>
<dbReference type="RefSeq" id="WP_003813784.1">
    <property type="nucleotide sequence ID" value="NC_002927.3"/>
</dbReference>
<dbReference type="SMR" id="Q7WD33"/>
<dbReference type="GeneID" id="93205076"/>
<dbReference type="KEGG" id="bbr:BB3745"/>
<dbReference type="eggNOG" id="COG1159">
    <property type="taxonomic scope" value="Bacteria"/>
</dbReference>
<dbReference type="HOGENOM" id="CLU_038009_1_0_4"/>
<dbReference type="Proteomes" id="UP000001027">
    <property type="component" value="Chromosome"/>
</dbReference>
<dbReference type="GO" id="GO:0005829">
    <property type="term" value="C:cytosol"/>
    <property type="evidence" value="ECO:0007669"/>
    <property type="project" value="TreeGrafter"/>
</dbReference>
<dbReference type="GO" id="GO:0005886">
    <property type="term" value="C:plasma membrane"/>
    <property type="evidence" value="ECO:0007669"/>
    <property type="project" value="UniProtKB-SubCell"/>
</dbReference>
<dbReference type="GO" id="GO:0005525">
    <property type="term" value="F:GTP binding"/>
    <property type="evidence" value="ECO:0007669"/>
    <property type="project" value="UniProtKB-UniRule"/>
</dbReference>
<dbReference type="GO" id="GO:0003924">
    <property type="term" value="F:GTPase activity"/>
    <property type="evidence" value="ECO:0007669"/>
    <property type="project" value="UniProtKB-UniRule"/>
</dbReference>
<dbReference type="GO" id="GO:0043024">
    <property type="term" value="F:ribosomal small subunit binding"/>
    <property type="evidence" value="ECO:0007669"/>
    <property type="project" value="TreeGrafter"/>
</dbReference>
<dbReference type="GO" id="GO:0070181">
    <property type="term" value="F:small ribosomal subunit rRNA binding"/>
    <property type="evidence" value="ECO:0007669"/>
    <property type="project" value="UniProtKB-UniRule"/>
</dbReference>
<dbReference type="GO" id="GO:0000028">
    <property type="term" value="P:ribosomal small subunit assembly"/>
    <property type="evidence" value="ECO:0007669"/>
    <property type="project" value="TreeGrafter"/>
</dbReference>
<dbReference type="CDD" id="cd04163">
    <property type="entry name" value="Era"/>
    <property type="match status" value="1"/>
</dbReference>
<dbReference type="CDD" id="cd22534">
    <property type="entry name" value="KH-II_Era"/>
    <property type="match status" value="1"/>
</dbReference>
<dbReference type="Gene3D" id="3.30.300.20">
    <property type="match status" value="1"/>
</dbReference>
<dbReference type="Gene3D" id="3.40.50.300">
    <property type="entry name" value="P-loop containing nucleotide triphosphate hydrolases"/>
    <property type="match status" value="1"/>
</dbReference>
<dbReference type="HAMAP" id="MF_00367">
    <property type="entry name" value="GTPase_Era"/>
    <property type="match status" value="1"/>
</dbReference>
<dbReference type="InterPro" id="IPR030388">
    <property type="entry name" value="G_ERA_dom"/>
</dbReference>
<dbReference type="InterPro" id="IPR006073">
    <property type="entry name" value="GTP-bd"/>
</dbReference>
<dbReference type="InterPro" id="IPR005662">
    <property type="entry name" value="GTPase_Era-like"/>
</dbReference>
<dbReference type="InterPro" id="IPR015946">
    <property type="entry name" value="KH_dom-like_a/b"/>
</dbReference>
<dbReference type="InterPro" id="IPR004044">
    <property type="entry name" value="KH_dom_type_2"/>
</dbReference>
<dbReference type="InterPro" id="IPR009019">
    <property type="entry name" value="KH_sf_prok-type"/>
</dbReference>
<dbReference type="InterPro" id="IPR027417">
    <property type="entry name" value="P-loop_NTPase"/>
</dbReference>
<dbReference type="InterPro" id="IPR005225">
    <property type="entry name" value="Small_GTP-bd"/>
</dbReference>
<dbReference type="NCBIfam" id="TIGR00436">
    <property type="entry name" value="era"/>
    <property type="match status" value="1"/>
</dbReference>
<dbReference type="NCBIfam" id="NF000908">
    <property type="entry name" value="PRK00089.1"/>
    <property type="match status" value="1"/>
</dbReference>
<dbReference type="NCBIfam" id="TIGR00231">
    <property type="entry name" value="small_GTP"/>
    <property type="match status" value="1"/>
</dbReference>
<dbReference type="PANTHER" id="PTHR42698">
    <property type="entry name" value="GTPASE ERA"/>
    <property type="match status" value="1"/>
</dbReference>
<dbReference type="PANTHER" id="PTHR42698:SF1">
    <property type="entry name" value="GTPASE ERA, MITOCHONDRIAL"/>
    <property type="match status" value="1"/>
</dbReference>
<dbReference type="Pfam" id="PF07650">
    <property type="entry name" value="KH_2"/>
    <property type="match status" value="1"/>
</dbReference>
<dbReference type="Pfam" id="PF01926">
    <property type="entry name" value="MMR_HSR1"/>
    <property type="match status" value="1"/>
</dbReference>
<dbReference type="PRINTS" id="PR00326">
    <property type="entry name" value="GTP1OBG"/>
</dbReference>
<dbReference type="SUPFAM" id="SSF52540">
    <property type="entry name" value="P-loop containing nucleoside triphosphate hydrolases"/>
    <property type="match status" value="1"/>
</dbReference>
<dbReference type="SUPFAM" id="SSF54814">
    <property type="entry name" value="Prokaryotic type KH domain (KH-domain type II)"/>
    <property type="match status" value="1"/>
</dbReference>
<dbReference type="PROSITE" id="PS51713">
    <property type="entry name" value="G_ERA"/>
    <property type="match status" value="1"/>
</dbReference>
<feature type="chain" id="PRO_1000121300" description="GTPase Era">
    <location>
        <begin position="1"/>
        <end position="296"/>
    </location>
</feature>
<feature type="domain" description="Era-type G" evidence="2">
    <location>
        <begin position="7"/>
        <end position="174"/>
    </location>
</feature>
<feature type="domain" description="KH type-2" evidence="1">
    <location>
        <begin position="205"/>
        <end position="281"/>
    </location>
</feature>
<feature type="region of interest" description="G1" evidence="2">
    <location>
        <begin position="15"/>
        <end position="22"/>
    </location>
</feature>
<feature type="region of interest" description="G2" evidence="2">
    <location>
        <begin position="41"/>
        <end position="45"/>
    </location>
</feature>
<feature type="region of interest" description="G3" evidence="2">
    <location>
        <begin position="62"/>
        <end position="65"/>
    </location>
</feature>
<feature type="region of interest" description="G4" evidence="2">
    <location>
        <begin position="123"/>
        <end position="126"/>
    </location>
</feature>
<feature type="region of interest" description="G5" evidence="2">
    <location>
        <begin position="153"/>
        <end position="155"/>
    </location>
</feature>
<feature type="binding site" evidence="1">
    <location>
        <begin position="15"/>
        <end position="22"/>
    </location>
    <ligand>
        <name>GTP</name>
        <dbReference type="ChEBI" id="CHEBI:37565"/>
    </ligand>
</feature>
<feature type="binding site" evidence="1">
    <location>
        <begin position="62"/>
        <end position="66"/>
    </location>
    <ligand>
        <name>GTP</name>
        <dbReference type="ChEBI" id="CHEBI:37565"/>
    </ligand>
</feature>
<feature type="binding site" evidence="1">
    <location>
        <begin position="123"/>
        <end position="126"/>
    </location>
    <ligand>
        <name>GTP</name>
        <dbReference type="ChEBI" id="CHEBI:37565"/>
    </ligand>
</feature>
<comment type="function">
    <text evidence="1">An essential GTPase that binds both GDP and GTP, with rapid nucleotide exchange. Plays a role in 16S rRNA processing and 30S ribosomal subunit biogenesis and possibly also in cell cycle regulation and energy metabolism.</text>
</comment>
<comment type="subunit">
    <text evidence="1">Monomer.</text>
</comment>
<comment type="subcellular location">
    <subcellularLocation>
        <location>Cytoplasm</location>
    </subcellularLocation>
    <subcellularLocation>
        <location evidence="1">Cell inner membrane</location>
        <topology evidence="1">Peripheral membrane protein</topology>
    </subcellularLocation>
</comment>
<comment type="similarity">
    <text evidence="1 2">Belongs to the TRAFAC class TrmE-Era-EngA-EngB-Septin-like GTPase superfamily. Era GTPase family.</text>
</comment>
<reference key="1">
    <citation type="journal article" date="2003" name="Nat. Genet.">
        <title>Comparative analysis of the genome sequences of Bordetella pertussis, Bordetella parapertussis and Bordetella bronchiseptica.</title>
        <authorList>
            <person name="Parkhill J."/>
            <person name="Sebaihia M."/>
            <person name="Preston A."/>
            <person name="Murphy L.D."/>
            <person name="Thomson N.R."/>
            <person name="Harris D.E."/>
            <person name="Holden M.T.G."/>
            <person name="Churcher C.M."/>
            <person name="Bentley S.D."/>
            <person name="Mungall K.L."/>
            <person name="Cerdeno-Tarraga A.-M."/>
            <person name="Temple L."/>
            <person name="James K.D."/>
            <person name="Harris B."/>
            <person name="Quail M.A."/>
            <person name="Achtman M."/>
            <person name="Atkin R."/>
            <person name="Baker S."/>
            <person name="Basham D."/>
            <person name="Bason N."/>
            <person name="Cherevach I."/>
            <person name="Chillingworth T."/>
            <person name="Collins M."/>
            <person name="Cronin A."/>
            <person name="Davis P."/>
            <person name="Doggett J."/>
            <person name="Feltwell T."/>
            <person name="Goble A."/>
            <person name="Hamlin N."/>
            <person name="Hauser H."/>
            <person name="Holroyd S."/>
            <person name="Jagels K."/>
            <person name="Leather S."/>
            <person name="Moule S."/>
            <person name="Norberczak H."/>
            <person name="O'Neil S."/>
            <person name="Ormond D."/>
            <person name="Price C."/>
            <person name="Rabbinowitsch E."/>
            <person name="Rutter S."/>
            <person name="Sanders M."/>
            <person name="Saunders D."/>
            <person name="Seeger K."/>
            <person name="Sharp S."/>
            <person name="Simmonds M."/>
            <person name="Skelton J."/>
            <person name="Squares R."/>
            <person name="Squares S."/>
            <person name="Stevens K."/>
            <person name="Unwin L."/>
            <person name="Whitehead S."/>
            <person name="Barrell B.G."/>
            <person name="Maskell D.J."/>
        </authorList>
    </citation>
    <scope>NUCLEOTIDE SEQUENCE [LARGE SCALE GENOMIC DNA]</scope>
    <source>
        <strain>ATCC BAA-588 / NCTC 13252 / RB50</strain>
    </source>
</reference>
<accession>Q7WD33</accession>
<gene>
    <name evidence="1" type="primary">era</name>
    <name type="ordered locus">BB3745</name>
</gene>
<proteinExistence type="inferred from homology"/>
<name>ERA_BORBR</name>
<organism>
    <name type="scientific">Bordetella bronchiseptica (strain ATCC BAA-588 / NCTC 13252 / RB50)</name>
    <name type="common">Alcaligenes bronchisepticus</name>
    <dbReference type="NCBI Taxonomy" id="257310"/>
    <lineage>
        <taxon>Bacteria</taxon>
        <taxon>Pseudomonadati</taxon>
        <taxon>Pseudomonadota</taxon>
        <taxon>Betaproteobacteria</taxon>
        <taxon>Burkholderiales</taxon>
        <taxon>Alcaligenaceae</taxon>
        <taxon>Bordetella</taxon>
    </lineage>
</organism>
<keyword id="KW-0997">Cell inner membrane</keyword>
<keyword id="KW-1003">Cell membrane</keyword>
<keyword id="KW-0963">Cytoplasm</keyword>
<keyword id="KW-0342">GTP-binding</keyword>
<keyword id="KW-0472">Membrane</keyword>
<keyword id="KW-0547">Nucleotide-binding</keyword>
<keyword id="KW-0690">Ribosome biogenesis</keyword>
<keyword id="KW-0694">RNA-binding</keyword>
<keyword id="KW-0699">rRNA-binding</keyword>
<evidence type="ECO:0000255" key="1">
    <source>
        <dbReference type="HAMAP-Rule" id="MF_00367"/>
    </source>
</evidence>
<evidence type="ECO:0000255" key="2">
    <source>
        <dbReference type="PROSITE-ProRule" id="PRU01050"/>
    </source>
</evidence>